<comment type="function">
    <text>Catalyzes oxidation of malate to oxaloacetate in the citric acid cycle. Donates electrons to quinones of the electron transfer chain.</text>
</comment>
<comment type="catalytic activity">
    <reaction>
        <text>(S)-malate + a quinone = a quinol + oxaloacetate</text>
        <dbReference type="Rhea" id="RHEA:46012"/>
        <dbReference type="ChEBI" id="CHEBI:15589"/>
        <dbReference type="ChEBI" id="CHEBI:16452"/>
        <dbReference type="ChEBI" id="CHEBI:24646"/>
        <dbReference type="ChEBI" id="CHEBI:132124"/>
        <dbReference type="EC" id="1.1.5.4"/>
    </reaction>
</comment>
<comment type="cofactor">
    <cofactor>
        <name>FAD</name>
        <dbReference type="ChEBI" id="CHEBI:57692"/>
    </cofactor>
    <text>The FAD is tightly bound.</text>
</comment>
<comment type="pathway">
    <text>Carbohydrate metabolism; tricarboxylic acid cycle; oxaloacetate from (S)-malate (quinone route): step 1/1.</text>
</comment>
<comment type="subcellular location">
    <subcellularLocation>
        <location>Cell membrane</location>
        <topology>Peripheral membrane protein</topology>
    </subcellularLocation>
</comment>
<comment type="similarity">
    <text evidence="1">Belongs to the MQO family.</text>
</comment>
<dbReference type="EC" id="1.1.5.4"/>
<dbReference type="EMBL" id="AE000511">
    <property type="protein sequence ID" value="AAD07155.1"/>
    <property type="molecule type" value="Genomic_DNA"/>
</dbReference>
<dbReference type="PIR" id="F64530">
    <property type="entry name" value="F64530"/>
</dbReference>
<dbReference type="RefSeq" id="NP_206886.1">
    <property type="nucleotide sequence ID" value="NC_000915.1"/>
</dbReference>
<dbReference type="RefSeq" id="WP_000061441.1">
    <property type="nucleotide sequence ID" value="NC_018939.1"/>
</dbReference>
<dbReference type="SMR" id="O24913"/>
<dbReference type="FunCoup" id="O24913">
    <property type="interactions" value="90"/>
</dbReference>
<dbReference type="IntAct" id="O24913">
    <property type="interactions" value="1"/>
</dbReference>
<dbReference type="MINT" id="O24913"/>
<dbReference type="STRING" id="85962.HP_0086"/>
<dbReference type="PaxDb" id="85962-C694_00420"/>
<dbReference type="DNASU" id="899112"/>
<dbReference type="EnsemblBacteria" id="AAD07155">
    <property type="protein sequence ID" value="AAD07155"/>
    <property type="gene ID" value="HP_0086"/>
</dbReference>
<dbReference type="KEGG" id="heo:C694_00420"/>
<dbReference type="KEGG" id="hpy:HP_0086"/>
<dbReference type="PATRIC" id="fig|85962.47.peg.92"/>
<dbReference type="eggNOG" id="COG0579">
    <property type="taxonomic scope" value="Bacteria"/>
</dbReference>
<dbReference type="InParanoid" id="O24913"/>
<dbReference type="OrthoDB" id="5337444at2"/>
<dbReference type="PhylomeDB" id="O24913"/>
<dbReference type="BioCyc" id="MetaCyc:HP_RS00435-MONOMER"/>
<dbReference type="BRENDA" id="1.1.5.4">
    <property type="organism ID" value="2604"/>
</dbReference>
<dbReference type="UniPathway" id="UPA00223">
    <property type="reaction ID" value="UER01008"/>
</dbReference>
<dbReference type="Proteomes" id="UP000000429">
    <property type="component" value="Chromosome"/>
</dbReference>
<dbReference type="GO" id="GO:0005737">
    <property type="term" value="C:cytoplasm"/>
    <property type="evidence" value="ECO:0000318"/>
    <property type="project" value="GO_Central"/>
</dbReference>
<dbReference type="GO" id="GO:0005886">
    <property type="term" value="C:plasma membrane"/>
    <property type="evidence" value="ECO:0007669"/>
    <property type="project" value="UniProtKB-SubCell"/>
</dbReference>
<dbReference type="GO" id="GO:0047545">
    <property type="term" value="F:2-hydroxyglutarate dehydrogenase activity"/>
    <property type="evidence" value="ECO:0000318"/>
    <property type="project" value="GO_Central"/>
</dbReference>
<dbReference type="GO" id="GO:0008924">
    <property type="term" value="F:L-malate dehydrogenase (quinone) activity"/>
    <property type="evidence" value="ECO:0007669"/>
    <property type="project" value="UniProtKB-UniRule"/>
</dbReference>
<dbReference type="GO" id="GO:0006099">
    <property type="term" value="P:tricarboxylic acid cycle"/>
    <property type="evidence" value="ECO:0007669"/>
    <property type="project" value="UniProtKB-UniRule"/>
</dbReference>
<dbReference type="FunFam" id="3.50.50.60:FF:000332">
    <property type="entry name" value="Probable malate:quinone oxidoreductase"/>
    <property type="match status" value="1"/>
</dbReference>
<dbReference type="Gene3D" id="3.30.9.10">
    <property type="entry name" value="D-Amino Acid Oxidase, subunit A, domain 2"/>
    <property type="match status" value="1"/>
</dbReference>
<dbReference type="Gene3D" id="3.50.50.60">
    <property type="entry name" value="FAD/NAD(P)-binding domain"/>
    <property type="match status" value="1"/>
</dbReference>
<dbReference type="HAMAP" id="MF_00212">
    <property type="entry name" value="MQO"/>
    <property type="match status" value="1"/>
</dbReference>
<dbReference type="InterPro" id="IPR036188">
    <property type="entry name" value="FAD/NAD-bd_sf"/>
</dbReference>
<dbReference type="InterPro" id="IPR006231">
    <property type="entry name" value="MQO"/>
</dbReference>
<dbReference type="PANTHER" id="PTHR43104">
    <property type="entry name" value="L-2-HYDROXYGLUTARATE DEHYDROGENASE, MITOCHONDRIAL"/>
    <property type="match status" value="1"/>
</dbReference>
<dbReference type="PANTHER" id="PTHR43104:SF2">
    <property type="entry name" value="L-2-HYDROXYGLUTARATE DEHYDROGENASE, MITOCHONDRIAL"/>
    <property type="match status" value="1"/>
</dbReference>
<dbReference type="Pfam" id="PF06039">
    <property type="entry name" value="Mqo"/>
    <property type="match status" value="1"/>
</dbReference>
<dbReference type="SUPFAM" id="SSF51905">
    <property type="entry name" value="FAD/NAD(P)-binding domain"/>
    <property type="match status" value="1"/>
</dbReference>
<evidence type="ECO:0000305" key="1"/>
<accession>O24913</accession>
<organism>
    <name type="scientific">Helicobacter pylori (strain ATCC 700392 / 26695)</name>
    <name type="common">Campylobacter pylori</name>
    <dbReference type="NCBI Taxonomy" id="85962"/>
    <lineage>
        <taxon>Bacteria</taxon>
        <taxon>Pseudomonadati</taxon>
        <taxon>Campylobacterota</taxon>
        <taxon>Epsilonproteobacteria</taxon>
        <taxon>Campylobacterales</taxon>
        <taxon>Helicobacteraceae</taxon>
        <taxon>Helicobacter</taxon>
    </lineage>
</organism>
<name>MQO_HELPY</name>
<protein>
    <recommendedName>
        <fullName>Malate:quinone oxidoreductase</fullName>
        <ecNumber>1.1.5.4</ecNumber>
    </recommendedName>
    <alternativeName>
        <fullName>MQO</fullName>
    </alternativeName>
    <alternativeName>
        <fullName>Malate dehydrogenase [quinone]</fullName>
    </alternativeName>
</protein>
<sequence>MSMEFDAVIIGGGVSGCATFYTLSEYSSLKRVAIVEKCSKLAQISSSAKANSQTIHDGSIETNYTPEKAKKVRLSAYKTRQYALNKGLQNEVIFETQKMAIGVGDEECEFMKKRYESFKEIFVGLEEFDKQKIKELEPNVILGANGIDRHENIIGHGYRKDWSTMNFAKLSENFVEEALKLKPNNQVFLNFKVKKIEKRNDTYAVISEDAEEVYAKFVLVNAGSYALPLAQSMGYGLDLGCLPVAGSFYFVPDLLRGKVYTVQNPKLPFAAVHGDPDAVIKGKTRIGPTALTMPKLERNKCWLKGISLELLKMDLNKDVFKIAFDLMSDKEIRNYVFKNMVFELPIIGKRKFLKDAQKIIPSLSLEDLEYAHGFGEVRPQVLDRTKRKLELGEKKICTHKGITFNMTPSPGATSCLQNALVDSQEIAAYLGESFELERFYKDLSPEELEN</sequence>
<keyword id="KW-1003">Cell membrane</keyword>
<keyword id="KW-0274">FAD</keyword>
<keyword id="KW-0285">Flavoprotein</keyword>
<keyword id="KW-0472">Membrane</keyword>
<keyword id="KW-0560">Oxidoreductase</keyword>
<keyword id="KW-1185">Reference proteome</keyword>
<keyword id="KW-0816">Tricarboxylic acid cycle</keyword>
<gene>
    <name type="primary">mqo</name>
    <name type="ordered locus">HP_0086</name>
</gene>
<proteinExistence type="evidence at protein level"/>
<feature type="chain" id="PRO_0000128717" description="Malate:quinone oxidoreductase">
    <location>
        <begin position="1"/>
        <end position="450"/>
    </location>
</feature>
<reference key="1">
    <citation type="journal article" date="1997" name="Nature">
        <title>The complete genome sequence of the gastric pathogen Helicobacter pylori.</title>
        <authorList>
            <person name="Tomb J.-F."/>
            <person name="White O."/>
            <person name="Kerlavage A.R."/>
            <person name="Clayton R.A."/>
            <person name="Sutton G.G."/>
            <person name="Fleischmann R.D."/>
            <person name="Ketchum K.A."/>
            <person name="Klenk H.-P."/>
            <person name="Gill S.R."/>
            <person name="Dougherty B.A."/>
            <person name="Nelson K.E."/>
            <person name="Quackenbush J."/>
            <person name="Zhou L."/>
            <person name="Kirkness E.F."/>
            <person name="Peterson S.N."/>
            <person name="Loftus B.J."/>
            <person name="Richardson D.L."/>
            <person name="Dodson R.J."/>
            <person name="Khalak H.G."/>
            <person name="Glodek A."/>
            <person name="McKenney K."/>
            <person name="FitzGerald L.M."/>
            <person name="Lee N."/>
            <person name="Adams M.D."/>
            <person name="Hickey E.K."/>
            <person name="Berg D.E."/>
            <person name="Gocayne J.D."/>
            <person name="Utterback T.R."/>
            <person name="Peterson J.D."/>
            <person name="Kelley J.M."/>
            <person name="Cotton M.D."/>
            <person name="Weidman J.F."/>
            <person name="Fujii C."/>
            <person name="Bowman C."/>
            <person name="Watthey L."/>
            <person name="Wallin E."/>
            <person name="Hayes W.S."/>
            <person name="Borodovsky M."/>
            <person name="Karp P.D."/>
            <person name="Smith H.O."/>
            <person name="Fraser C.M."/>
            <person name="Venter J.C."/>
        </authorList>
    </citation>
    <scope>NUCLEOTIDE SEQUENCE [LARGE SCALE GENOMIC DNA]</scope>
    <source>
        <strain>ATCC 700392 / 26695</strain>
    </source>
</reference>
<reference key="2">
    <citation type="journal article" date="2000" name="J. Bacteriol.">
        <title>Another unusual type of citric acid cycle enzyme in Helicobacter pylori: the malate:quinone oxidoreductase.</title>
        <authorList>
            <person name="Kather B."/>
            <person name="Stingl K."/>
            <person name="van der Rest M.E."/>
            <person name="Altendorf K."/>
            <person name="Molenaar D."/>
        </authorList>
    </citation>
    <scope>CHARACTERIZATION</scope>
    <source>
        <strain>ATCC 49503 / 60190</strain>
    </source>
</reference>